<protein>
    <recommendedName>
        <fullName evidence="1">Cell division topological specificity factor</fullName>
    </recommendedName>
</protein>
<organism>
    <name type="scientific">Helicobacter pylori (strain G27)</name>
    <dbReference type="NCBI Taxonomy" id="563041"/>
    <lineage>
        <taxon>Bacteria</taxon>
        <taxon>Pseudomonadati</taxon>
        <taxon>Campylobacterota</taxon>
        <taxon>Epsilonproteobacteria</taxon>
        <taxon>Campylobacterales</taxon>
        <taxon>Helicobacteraceae</taxon>
        <taxon>Helicobacter</taxon>
    </lineage>
</organism>
<feature type="chain" id="PRO_1000114224" description="Cell division topological specificity factor">
    <location>
        <begin position="1"/>
        <end position="77"/>
    </location>
</feature>
<gene>
    <name evidence="1" type="primary">minE</name>
    <name type="ordered locus">HPG27_314</name>
</gene>
<reference key="1">
    <citation type="journal article" date="2009" name="J. Bacteriol.">
        <title>The complete genome sequence of Helicobacter pylori strain G27.</title>
        <authorList>
            <person name="Baltrus D.A."/>
            <person name="Amieva M.R."/>
            <person name="Covacci A."/>
            <person name="Lowe T.M."/>
            <person name="Merrell D.S."/>
            <person name="Ottemann K.M."/>
            <person name="Stein M."/>
            <person name="Salama N.R."/>
            <person name="Guillemin K."/>
        </authorList>
    </citation>
    <scope>NUCLEOTIDE SEQUENCE [LARGE SCALE GENOMIC DNA]</scope>
    <source>
        <strain>G27</strain>
    </source>
</reference>
<sequence length="77" mass="8892">MSLFDFFKNKGSAATATDRLKLILAKERTLNLPYMEEMRKEIIAVIQKYTKSSDIHFKTLDSNQSVETIEVEIILPK</sequence>
<dbReference type="EMBL" id="CP001173">
    <property type="protein sequence ID" value="ACI27080.1"/>
    <property type="molecule type" value="Genomic_DNA"/>
</dbReference>
<dbReference type="RefSeq" id="WP_000051414.1">
    <property type="nucleotide sequence ID" value="NC_011333.1"/>
</dbReference>
<dbReference type="SMR" id="B5ZAA0"/>
<dbReference type="KEGG" id="hpg:HPG27_314"/>
<dbReference type="HOGENOM" id="CLU_137929_2_1_7"/>
<dbReference type="Proteomes" id="UP000001735">
    <property type="component" value="Chromosome"/>
</dbReference>
<dbReference type="GO" id="GO:0051301">
    <property type="term" value="P:cell division"/>
    <property type="evidence" value="ECO:0007669"/>
    <property type="project" value="UniProtKB-KW"/>
</dbReference>
<dbReference type="GO" id="GO:0032955">
    <property type="term" value="P:regulation of division septum assembly"/>
    <property type="evidence" value="ECO:0007669"/>
    <property type="project" value="InterPro"/>
</dbReference>
<dbReference type="Gene3D" id="3.30.1070.10">
    <property type="entry name" value="Cell division topological specificity factor MinE"/>
    <property type="match status" value="1"/>
</dbReference>
<dbReference type="HAMAP" id="MF_00262">
    <property type="entry name" value="MinE"/>
    <property type="match status" value="1"/>
</dbReference>
<dbReference type="InterPro" id="IPR005527">
    <property type="entry name" value="MinE"/>
</dbReference>
<dbReference type="InterPro" id="IPR036707">
    <property type="entry name" value="MinE_sf"/>
</dbReference>
<dbReference type="NCBIfam" id="TIGR01215">
    <property type="entry name" value="minE"/>
    <property type="match status" value="1"/>
</dbReference>
<dbReference type="NCBIfam" id="NF001422">
    <property type="entry name" value="PRK00296.1"/>
    <property type="match status" value="1"/>
</dbReference>
<dbReference type="Pfam" id="PF03776">
    <property type="entry name" value="MinE"/>
    <property type="match status" value="1"/>
</dbReference>
<dbReference type="SUPFAM" id="SSF55229">
    <property type="entry name" value="Cell division protein MinE topological specificity domain"/>
    <property type="match status" value="1"/>
</dbReference>
<proteinExistence type="inferred from homology"/>
<keyword id="KW-0131">Cell cycle</keyword>
<keyword id="KW-0132">Cell division</keyword>
<keyword id="KW-1185">Reference proteome</keyword>
<comment type="function">
    <text evidence="1">Prevents the cell division inhibition by proteins MinC and MinD at internal division sites while permitting inhibition at polar sites. This ensures cell division at the proper site by restricting the formation of a division septum at the midpoint of the long axis of the cell.</text>
</comment>
<comment type="similarity">
    <text evidence="1">Belongs to the MinE family.</text>
</comment>
<evidence type="ECO:0000255" key="1">
    <source>
        <dbReference type="HAMAP-Rule" id="MF_00262"/>
    </source>
</evidence>
<name>MINE_HELPG</name>
<accession>B5ZAA0</accession>